<feature type="chain" id="PRO_1000072463" description="Small ribosomal subunit protein uS10">
    <location>
        <begin position="1"/>
        <end position="102"/>
    </location>
</feature>
<organism>
    <name type="scientific">Lactobacillus helveticus (strain DPC 4571)</name>
    <dbReference type="NCBI Taxonomy" id="405566"/>
    <lineage>
        <taxon>Bacteria</taxon>
        <taxon>Bacillati</taxon>
        <taxon>Bacillota</taxon>
        <taxon>Bacilli</taxon>
        <taxon>Lactobacillales</taxon>
        <taxon>Lactobacillaceae</taxon>
        <taxon>Lactobacillus</taxon>
    </lineage>
</organism>
<accession>A8YXK4</accession>
<sequence>MASQTIRIRLKSYEHGILDESAAKIVATAKRTGAEISGPVPLPTERTLFTVLRSPHKNKDSREQFEMRTHKRLIDILNPTPKTVDSLMKLDLPSGVDIEIKL</sequence>
<comment type="function">
    <text evidence="1">Involved in the binding of tRNA to the ribosomes.</text>
</comment>
<comment type="subunit">
    <text evidence="1">Part of the 30S ribosomal subunit.</text>
</comment>
<comment type="similarity">
    <text evidence="1">Belongs to the universal ribosomal protein uS10 family.</text>
</comment>
<proteinExistence type="inferred from homology"/>
<gene>
    <name evidence="1" type="primary">rpsJ</name>
    <name type="ordered locus">lhv_0311</name>
</gene>
<evidence type="ECO:0000255" key="1">
    <source>
        <dbReference type="HAMAP-Rule" id="MF_00508"/>
    </source>
</evidence>
<evidence type="ECO:0000305" key="2"/>
<name>RS10_LACH4</name>
<keyword id="KW-0687">Ribonucleoprotein</keyword>
<keyword id="KW-0689">Ribosomal protein</keyword>
<protein>
    <recommendedName>
        <fullName evidence="1">Small ribosomal subunit protein uS10</fullName>
    </recommendedName>
    <alternativeName>
        <fullName evidence="2">30S ribosomal protein S10</fullName>
    </alternativeName>
</protein>
<reference key="1">
    <citation type="journal article" date="2008" name="J. Bacteriol.">
        <title>Genome sequence of Lactobacillus helveticus: an organism distinguished by selective gene loss and IS element expansion.</title>
        <authorList>
            <person name="Callanan M."/>
            <person name="Kaleta P."/>
            <person name="O'Callaghan J."/>
            <person name="O'Sullivan O."/>
            <person name="Jordan K."/>
            <person name="McAuliffe O."/>
            <person name="Sangrador-Vegas A."/>
            <person name="Slattery L."/>
            <person name="Fitzgerald G.F."/>
            <person name="Beresford T."/>
            <person name="Ross R.P."/>
        </authorList>
    </citation>
    <scope>NUCLEOTIDE SEQUENCE [LARGE SCALE GENOMIC DNA]</scope>
    <source>
        <strain>DPC 4571</strain>
    </source>
</reference>
<dbReference type="EMBL" id="CP000517">
    <property type="protein sequence ID" value="ABX26535.1"/>
    <property type="molecule type" value="Genomic_DNA"/>
</dbReference>
<dbReference type="RefSeq" id="WP_003549023.1">
    <property type="nucleotide sequence ID" value="NC_010080.1"/>
</dbReference>
<dbReference type="SMR" id="A8YXK4"/>
<dbReference type="GeneID" id="93290602"/>
<dbReference type="KEGG" id="lhe:lhv_0311"/>
<dbReference type="eggNOG" id="COG0051">
    <property type="taxonomic scope" value="Bacteria"/>
</dbReference>
<dbReference type="HOGENOM" id="CLU_122625_1_3_9"/>
<dbReference type="Proteomes" id="UP000000790">
    <property type="component" value="Chromosome"/>
</dbReference>
<dbReference type="GO" id="GO:1990904">
    <property type="term" value="C:ribonucleoprotein complex"/>
    <property type="evidence" value="ECO:0007669"/>
    <property type="project" value="UniProtKB-KW"/>
</dbReference>
<dbReference type="GO" id="GO:0005840">
    <property type="term" value="C:ribosome"/>
    <property type="evidence" value="ECO:0007669"/>
    <property type="project" value="UniProtKB-KW"/>
</dbReference>
<dbReference type="GO" id="GO:0003735">
    <property type="term" value="F:structural constituent of ribosome"/>
    <property type="evidence" value="ECO:0007669"/>
    <property type="project" value="InterPro"/>
</dbReference>
<dbReference type="GO" id="GO:0000049">
    <property type="term" value="F:tRNA binding"/>
    <property type="evidence" value="ECO:0007669"/>
    <property type="project" value="UniProtKB-UniRule"/>
</dbReference>
<dbReference type="GO" id="GO:0006412">
    <property type="term" value="P:translation"/>
    <property type="evidence" value="ECO:0007669"/>
    <property type="project" value="UniProtKB-UniRule"/>
</dbReference>
<dbReference type="FunFam" id="3.30.70.600:FF:000001">
    <property type="entry name" value="30S ribosomal protein S10"/>
    <property type="match status" value="1"/>
</dbReference>
<dbReference type="Gene3D" id="3.30.70.600">
    <property type="entry name" value="Ribosomal protein S10 domain"/>
    <property type="match status" value="1"/>
</dbReference>
<dbReference type="HAMAP" id="MF_00508">
    <property type="entry name" value="Ribosomal_uS10"/>
    <property type="match status" value="1"/>
</dbReference>
<dbReference type="InterPro" id="IPR001848">
    <property type="entry name" value="Ribosomal_uS10"/>
</dbReference>
<dbReference type="InterPro" id="IPR018268">
    <property type="entry name" value="Ribosomal_uS10_CS"/>
</dbReference>
<dbReference type="InterPro" id="IPR027486">
    <property type="entry name" value="Ribosomal_uS10_dom"/>
</dbReference>
<dbReference type="InterPro" id="IPR036838">
    <property type="entry name" value="Ribosomal_uS10_dom_sf"/>
</dbReference>
<dbReference type="NCBIfam" id="NF001861">
    <property type="entry name" value="PRK00596.1"/>
    <property type="match status" value="1"/>
</dbReference>
<dbReference type="NCBIfam" id="TIGR01049">
    <property type="entry name" value="rpsJ_bact"/>
    <property type="match status" value="1"/>
</dbReference>
<dbReference type="PANTHER" id="PTHR11700">
    <property type="entry name" value="30S RIBOSOMAL PROTEIN S10 FAMILY MEMBER"/>
    <property type="match status" value="1"/>
</dbReference>
<dbReference type="Pfam" id="PF00338">
    <property type="entry name" value="Ribosomal_S10"/>
    <property type="match status" value="1"/>
</dbReference>
<dbReference type="PRINTS" id="PR00971">
    <property type="entry name" value="RIBOSOMALS10"/>
</dbReference>
<dbReference type="SMART" id="SM01403">
    <property type="entry name" value="Ribosomal_S10"/>
    <property type="match status" value="1"/>
</dbReference>
<dbReference type="SUPFAM" id="SSF54999">
    <property type="entry name" value="Ribosomal protein S10"/>
    <property type="match status" value="1"/>
</dbReference>
<dbReference type="PROSITE" id="PS00361">
    <property type="entry name" value="RIBOSOMAL_S10"/>
    <property type="match status" value="1"/>
</dbReference>